<organism>
    <name type="scientific">Leptospira biflexa serovar Patoc (strain Patoc 1 / Ames)</name>
    <dbReference type="NCBI Taxonomy" id="355278"/>
    <lineage>
        <taxon>Bacteria</taxon>
        <taxon>Pseudomonadati</taxon>
        <taxon>Spirochaetota</taxon>
        <taxon>Spirochaetia</taxon>
        <taxon>Leptospirales</taxon>
        <taxon>Leptospiraceae</taxon>
        <taxon>Leptospira</taxon>
    </lineage>
</organism>
<keyword id="KW-0067">ATP-binding</keyword>
<keyword id="KW-0436">Ligase</keyword>
<keyword id="KW-0547">Nucleotide-binding</keyword>
<keyword id="KW-0648">Protein biosynthesis</keyword>
<sequence length="487" mass="55141">MEYEVIIGLEVHVQLNTNSKIFSTATNEFGGSPNTHISPLCVALPGTLPVLNEVVLEKAVRAGVALGCEITKFTKFDRKNYFYPDLPKGYQISQFDKPYATKGGIHVLLKGEKEEKFIPLTRIHMEEDAGKLIHSHDPSINRSYVDYNRAGTPLIEIVSEPDLRSSDEAYVYLNELKTILRYIQVSDCNMEEGSLRCDANVSIRPKGEKGFRTRVEIKNLNSFKAVKQAIDYEVEWQKDVYSRGESFKQMTKLWDATLLKTIPMRSKEMSHDYRYFPEPDLPTIQISDSFIEDIRKTLPELPRQKKERYKTELGLPEYDAEVLTSEREIAEYFEEALVIAGDAKKTSNWVKDEILGIVNKENISIQEFAIDPVRIGKLVKLINSGEITGKIAKTIFEDMLTTKDQPETIVEKNGLKVVRDDKALEEIVIRVIESQPESVEGWKNGKDRVLGAIVGGVMKETKGKADPKLVNELILAKLGPLGEKKKV</sequence>
<gene>
    <name evidence="1" type="primary">gatB</name>
    <name type="ordered locus">LBF_2841</name>
</gene>
<protein>
    <recommendedName>
        <fullName evidence="1">Aspartyl/glutamyl-tRNA(Asn/Gln) amidotransferase subunit B</fullName>
        <shortName evidence="1">Asp/Glu-ADT subunit B</shortName>
        <ecNumber evidence="1">6.3.5.-</ecNumber>
    </recommendedName>
</protein>
<feature type="chain" id="PRO_1000122521" description="Aspartyl/glutamyl-tRNA(Asn/Gln) amidotransferase subunit B">
    <location>
        <begin position="1"/>
        <end position="487"/>
    </location>
</feature>
<dbReference type="EC" id="6.3.5.-" evidence="1"/>
<dbReference type="EMBL" id="CP000777">
    <property type="protein sequence ID" value="ABZ95316.1"/>
    <property type="molecule type" value="Genomic_DNA"/>
</dbReference>
<dbReference type="RefSeq" id="WP_012389867.1">
    <property type="nucleotide sequence ID" value="NC_010842.1"/>
</dbReference>
<dbReference type="SMR" id="B0SFE8"/>
<dbReference type="KEGG" id="lbf:LBF_2841"/>
<dbReference type="HOGENOM" id="CLU_019240_0_0_12"/>
<dbReference type="GO" id="GO:0050566">
    <property type="term" value="F:asparaginyl-tRNA synthase (glutamine-hydrolyzing) activity"/>
    <property type="evidence" value="ECO:0007669"/>
    <property type="project" value="RHEA"/>
</dbReference>
<dbReference type="GO" id="GO:0005524">
    <property type="term" value="F:ATP binding"/>
    <property type="evidence" value="ECO:0007669"/>
    <property type="project" value="UniProtKB-KW"/>
</dbReference>
<dbReference type="GO" id="GO:0050567">
    <property type="term" value="F:glutaminyl-tRNA synthase (glutamine-hydrolyzing) activity"/>
    <property type="evidence" value="ECO:0007669"/>
    <property type="project" value="UniProtKB-UniRule"/>
</dbReference>
<dbReference type="GO" id="GO:0070681">
    <property type="term" value="P:glutaminyl-tRNAGln biosynthesis via transamidation"/>
    <property type="evidence" value="ECO:0007669"/>
    <property type="project" value="TreeGrafter"/>
</dbReference>
<dbReference type="GO" id="GO:0006412">
    <property type="term" value="P:translation"/>
    <property type="evidence" value="ECO:0007669"/>
    <property type="project" value="UniProtKB-UniRule"/>
</dbReference>
<dbReference type="FunFam" id="1.10.10.410:FF:000001">
    <property type="entry name" value="Aspartyl/glutamyl-tRNA(Asn/Gln) amidotransferase subunit B"/>
    <property type="match status" value="1"/>
</dbReference>
<dbReference type="FunFam" id="1.10.150.380:FF:000001">
    <property type="entry name" value="Aspartyl/glutamyl-tRNA(Asn/Gln) amidotransferase subunit B"/>
    <property type="match status" value="1"/>
</dbReference>
<dbReference type="Gene3D" id="1.10.10.410">
    <property type="match status" value="1"/>
</dbReference>
<dbReference type="Gene3D" id="1.10.150.380">
    <property type="entry name" value="GatB domain, N-terminal subdomain"/>
    <property type="match status" value="1"/>
</dbReference>
<dbReference type="HAMAP" id="MF_00121">
    <property type="entry name" value="GatB"/>
    <property type="match status" value="1"/>
</dbReference>
<dbReference type="InterPro" id="IPR017959">
    <property type="entry name" value="Asn/Gln-tRNA_amidoTrfase_suB/E"/>
</dbReference>
<dbReference type="InterPro" id="IPR006075">
    <property type="entry name" value="Asn/Gln-tRNA_Trfase_suB/E_cat"/>
</dbReference>
<dbReference type="InterPro" id="IPR018027">
    <property type="entry name" value="Asn/Gln_amidotransferase"/>
</dbReference>
<dbReference type="InterPro" id="IPR003789">
    <property type="entry name" value="Asn/Gln_tRNA_amidoTrase-B-like"/>
</dbReference>
<dbReference type="InterPro" id="IPR004413">
    <property type="entry name" value="GatB"/>
</dbReference>
<dbReference type="InterPro" id="IPR042114">
    <property type="entry name" value="GatB_C_1"/>
</dbReference>
<dbReference type="InterPro" id="IPR023168">
    <property type="entry name" value="GatB_Yqey_C_2"/>
</dbReference>
<dbReference type="InterPro" id="IPR017958">
    <property type="entry name" value="Gln-tRNA_amidoTrfase_suB_CS"/>
</dbReference>
<dbReference type="InterPro" id="IPR014746">
    <property type="entry name" value="Gln_synth/guanido_kin_cat_dom"/>
</dbReference>
<dbReference type="NCBIfam" id="TIGR00133">
    <property type="entry name" value="gatB"/>
    <property type="match status" value="1"/>
</dbReference>
<dbReference type="NCBIfam" id="NF004012">
    <property type="entry name" value="PRK05477.1-2"/>
    <property type="match status" value="1"/>
</dbReference>
<dbReference type="NCBIfam" id="NF004014">
    <property type="entry name" value="PRK05477.1-4"/>
    <property type="match status" value="1"/>
</dbReference>
<dbReference type="PANTHER" id="PTHR11659">
    <property type="entry name" value="GLUTAMYL-TRNA GLN AMIDOTRANSFERASE SUBUNIT B MITOCHONDRIAL AND PROKARYOTIC PET112-RELATED"/>
    <property type="match status" value="1"/>
</dbReference>
<dbReference type="PANTHER" id="PTHR11659:SF0">
    <property type="entry name" value="GLUTAMYL-TRNA(GLN) AMIDOTRANSFERASE SUBUNIT B, MITOCHONDRIAL"/>
    <property type="match status" value="1"/>
</dbReference>
<dbReference type="Pfam" id="PF02934">
    <property type="entry name" value="GatB_N"/>
    <property type="match status" value="1"/>
</dbReference>
<dbReference type="Pfam" id="PF02637">
    <property type="entry name" value="GatB_Yqey"/>
    <property type="match status" value="1"/>
</dbReference>
<dbReference type="SMART" id="SM00845">
    <property type="entry name" value="GatB_Yqey"/>
    <property type="match status" value="1"/>
</dbReference>
<dbReference type="SUPFAM" id="SSF89095">
    <property type="entry name" value="GatB/YqeY motif"/>
    <property type="match status" value="1"/>
</dbReference>
<dbReference type="SUPFAM" id="SSF55931">
    <property type="entry name" value="Glutamine synthetase/guanido kinase"/>
    <property type="match status" value="1"/>
</dbReference>
<dbReference type="PROSITE" id="PS01234">
    <property type="entry name" value="GATB"/>
    <property type="match status" value="1"/>
</dbReference>
<evidence type="ECO:0000255" key="1">
    <source>
        <dbReference type="HAMAP-Rule" id="MF_00121"/>
    </source>
</evidence>
<comment type="function">
    <text evidence="1">Allows the formation of correctly charged Asn-tRNA(Asn) or Gln-tRNA(Gln) through the transamidation of misacylated Asp-tRNA(Asn) or Glu-tRNA(Gln) in organisms which lack either or both of asparaginyl-tRNA or glutaminyl-tRNA synthetases. The reaction takes place in the presence of glutamine and ATP through an activated phospho-Asp-tRNA(Asn) or phospho-Glu-tRNA(Gln).</text>
</comment>
<comment type="catalytic activity">
    <reaction evidence="1">
        <text>L-glutamyl-tRNA(Gln) + L-glutamine + ATP + H2O = L-glutaminyl-tRNA(Gln) + L-glutamate + ADP + phosphate + H(+)</text>
        <dbReference type="Rhea" id="RHEA:17521"/>
        <dbReference type="Rhea" id="RHEA-COMP:9681"/>
        <dbReference type="Rhea" id="RHEA-COMP:9684"/>
        <dbReference type="ChEBI" id="CHEBI:15377"/>
        <dbReference type="ChEBI" id="CHEBI:15378"/>
        <dbReference type="ChEBI" id="CHEBI:29985"/>
        <dbReference type="ChEBI" id="CHEBI:30616"/>
        <dbReference type="ChEBI" id="CHEBI:43474"/>
        <dbReference type="ChEBI" id="CHEBI:58359"/>
        <dbReference type="ChEBI" id="CHEBI:78520"/>
        <dbReference type="ChEBI" id="CHEBI:78521"/>
        <dbReference type="ChEBI" id="CHEBI:456216"/>
    </reaction>
</comment>
<comment type="catalytic activity">
    <reaction evidence="1">
        <text>L-aspartyl-tRNA(Asn) + L-glutamine + ATP + H2O = L-asparaginyl-tRNA(Asn) + L-glutamate + ADP + phosphate + 2 H(+)</text>
        <dbReference type="Rhea" id="RHEA:14513"/>
        <dbReference type="Rhea" id="RHEA-COMP:9674"/>
        <dbReference type="Rhea" id="RHEA-COMP:9677"/>
        <dbReference type="ChEBI" id="CHEBI:15377"/>
        <dbReference type="ChEBI" id="CHEBI:15378"/>
        <dbReference type="ChEBI" id="CHEBI:29985"/>
        <dbReference type="ChEBI" id="CHEBI:30616"/>
        <dbReference type="ChEBI" id="CHEBI:43474"/>
        <dbReference type="ChEBI" id="CHEBI:58359"/>
        <dbReference type="ChEBI" id="CHEBI:78515"/>
        <dbReference type="ChEBI" id="CHEBI:78516"/>
        <dbReference type="ChEBI" id="CHEBI:456216"/>
    </reaction>
</comment>
<comment type="subunit">
    <text evidence="1">Heterotrimer of A, B and C subunits.</text>
</comment>
<comment type="similarity">
    <text evidence="1">Belongs to the GatB/GatE family. GatB subfamily.</text>
</comment>
<name>GATB_LEPBA</name>
<reference key="1">
    <citation type="journal article" date="2008" name="PLoS ONE">
        <title>Genome sequence of the saprophyte Leptospira biflexa provides insights into the evolution of Leptospira and the pathogenesis of leptospirosis.</title>
        <authorList>
            <person name="Picardeau M."/>
            <person name="Bulach D.M."/>
            <person name="Bouchier C."/>
            <person name="Zuerner R.L."/>
            <person name="Zidane N."/>
            <person name="Wilson P.J."/>
            <person name="Creno S."/>
            <person name="Kuczek E.S."/>
            <person name="Bommezzadri S."/>
            <person name="Davis J.C."/>
            <person name="McGrath A."/>
            <person name="Johnson M.J."/>
            <person name="Boursaux-Eude C."/>
            <person name="Seemann T."/>
            <person name="Rouy Z."/>
            <person name="Coppel R.L."/>
            <person name="Rood J.I."/>
            <person name="Lajus A."/>
            <person name="Davies J.K."/>
            <person name="Medigue C."/>
            <person name="Adler B."/>
        </authorList>
    </citation>
    <scope>NUCLEOTIDE SEQUENCE [LARGE SCALE GENOMIC DNA]</scope>
    <source>
        <strain>Patoc 1 / Ames</strain>
    </source>
</reference>
<accession>B0SFE8</accession>
<proteinExistence type="inferred from homology"/>